<reference key="1">
    <citation type="journal article" date="1998" name="Science">
        <title>Genome sequence of the nematode C. elegans: a platform for investigating biology.</title>
        <authorList>
            <consortium name="The C. elegans sequencing consortium"/>
        </authorList>
    </citation>
    <scope>NUCLEOTIDE SEQUENCE [LARGE SCALE GENOMIC DNA]</scope>
    <source>
        <strain>Bristol N2</strain>
    </source>
</reference>
<name>PLC2_CAEEL</name>
<comment type="function">
    <text evidence="1">Converts lysophosphatidic acid (LPA) into phosphatidic acid by incorporating an acyl moiety at the sn-2 position of the glycerol backbone.</text>
</comment>
<comment type="catalytic activity">
    <reaction>
        <text>a 1-acyl-sn-glycero-3-phosphate + an acyl-CoA = a 1,2-diacyl-sn-glycero-3-phosphate + CoA</text>
        <dbReference type="Rhea" id="RHEA:19709"/>
        <dbReference type="ChEBI" id="CHEBI:57287"/>
        <dbReference type="ChEBI" id="CHEBI:57970"/>
        <dbReference type="ChEBI" id="CHEBI:58342"/>
        <dbReference type="ChEBI" id="CHEBI:58608"/>
        <dbReference type="EC" id="2.3.1.51"/>
    </reaction>
</comment>
<comment type="pathway">
    <text>Phospholipid metabolism; CDP-diacylglycerol biosynthesis; CDP-diacylglycerol from sn-glycerol 3-phosphate: step 2/3.</text>
</comment>
<comment type="subcellular location">
    <subcellularLocation>
        <location evidence="3">Membrane</location>
        <topology evidence="3">Multi-pass membrane protein</topology>
    </subcellularLocation>
</comment>
<comment type="domain">
    <text evidence="1">The HXXXXD motif is essential for acyltransferase activity and may constitute the binding site for the phosphate moiety of the glycerol-3-phosphate.</text>
</comment>
<comment type="similarity">
    <text evidence="3">Belongs to the 1-acyl-sn-glycerol-3-phosphate acyltransferase family.</text>
</comment>
<gene>
    <name type="primary">acl-2</name>
    <name type="ORF">T06E8.1</name>
</gene>
<organism>
    <name type="scientific">Caenorhabditis elegans</name>
    <dbReference type="NCBI Taxonomy" id="6239"/>
    <lineage>
        <taxon>Eukaryota</taxon>
        <taxon>Metazoa</taxon>
        <taxon>Ecdysozoa</taxon>
        <taxon>Nematoda</taxon>
        <taxon>Chromadorea</taxon>
        <taxon>Rhabditida</taxon>
        <taxon>Rhabditina</taxon>
        <taxon>Rhabditomorpha</taxon>
        <taxon>Rhabditoidea</taxon>
        <taxon>Rhabditidae</taxon>
        <taxon>Peloderinae</taxon>
        <taxon>Caenorhabditis</taxon>
    </lineage>
</organism>
<sequence length="282" mass="32691">MENFWSIVVFFLLSILFILYNISTVCHYYMRISFYYFTILLHGMEVCVTMIPSWLNGKGADYVFHSFFYWCKWTGVHTTVYGYEKTQVEGPAVVICNHQSSLDILSMASIWPKNCVVMMKRILAYVPFFNLGAYFSNTIFIDRYNRERAMASVDYCASEMKNRNLKLWVFPEGTRNREGGFIPFKKGAFNIAVRAQIPIIPVVFSDYRDFYSKPGRYFKNDGEVVIRVLDAIPTKGLTLDDVSELSDMCRDVMLAAYKEVTLEAQQRNATRRGETKDGKKSE</sequence>
<proteinExistence type="inferred from homology"/>
<keyword id="KW-0012">Acyltransferase</keyword>
<keyword id="KW-0444">Lipid biosynthesis</keyword>
<keyword id="KW-0443">Lipid metabolism</keyword>
<keyword id="KW-0472">Membrane</keyword>
<keyword id="KW-0594">Phospholipid biosynthesis</keyword>
<keyword id="KW-1208">Phospholipid metabolism</keyword>
<keyword id="KW-1185">Reference proteome</keyword>
<keyword id="KW-0808">Transferase</keyword>
<keyword id="KW-0812">Transmembrane</keyword>
<keyword id="KW-1133">Transmembrane helix</keyword>
<evidence type="ECO:0000250" key="1"/>
<evidence type="ECO:0000255" key="2"/>
<evidence type="ECO:0000305" key="3"/>
<protein>
    <recommendedName>
        <fullName>Putative 1-acyl-sn-glycerol-3-phosphate acyltransferase acl-2</fullName>
        <shortName>1-AGP acyltransferase</shortName>
        <shortName>1-AGPAT</shortName>
        <ecNumber>2.3.1.51</ecNumber>
    </recommendedName>
    <alternativeName>
        <fullName>Lysophosphatidic acid acyltransferase</fullName>
        <shortName>LPAAT</shortName>
    </alternativeName>
</protein>
<accession>Q22267</accession>
<dbReference type="EC" id="2.3.1.51"/>
<dbReference type="EMBL" id="Z73975">
    <property type="protein sequence ID" value="CAA98276.1"/>
    <property type="molecule type" value="Genomic_DNA"/>
</dbReference>
<dbReference type="PIR" id="T24610">
    <property type="entry name" value="T24610"/>
</dbReference>
<dbReference type="RefSeq" id="NP_001256175.1">
    <property type="nucleotide sequence ID" value="NM_001269246.5"/>
</dbReference>
<dbReference type="SMR" id="Q22267"/>
<dbReference type="FunCoup" id="Q22267">
    <property type="interactions" value="2008"/>
</dbReference>
<dbReference type="STRING" id="6239.T06E8.1a.1"/>
<dbReference type="PaxDb" id="6239-T06E8.1a"/>
<dbReference type="PeptideAtlas" id="Q22267"/>
<dbReference type="EnsemblMetazoa" id="T06E8.1a.1">
    <property type="protein sequence ID" value="T06E8.1a.1"/>
    <property type="gene ID" value="WBGene00011543"/>
</dbReference>
<dbReference type="GeneID" id="179398"/>
<dbReference type="KEGG" id="cel:CELE_T06E8.1"/>
<dbReference type="UCSC" id="T06E8.1.1">
    <property type="organism name" value="c. elegans"/>
</dbReference>
<dbReference type="AGR" id="WB:WBGene00011543"/>
<dbReference type="CTD" id="179398"/>
<dbReference type="WormBase" id="T06E8.1a">
    <property type="protein sequence ID" value="CE06378"/>
    <property type="gene ID" value="WBGene00011543"/>
    <property type="gene designation" value="acl-2"/>
</dbReference>
<dbReference type="eggNOG" id="KOG2848">
    <property type="taxonomic scope" value="Eukaryota"/>
</dbReference>
<dbReference type="GeneTree" id="ENSGT00390000008726"/>
<dbReference type="HOGENOM" id="CLU_027938_10_1_1"/>
<dbReference type="InParanoid" id="Q22267"/>
<dbReference type="OMA" id="HIFDDGH"/>
<dbReference type="OrthoDB" id="202234at2759"/>
<dbReference type="PhylomeDB" id="Q22267"/>
<dbReference type="Reactome" id="R-CEL-1483166">
    <property type="pathway name" value="Synthesis of PA"/>
</dbReference>
<dbReference type="Reactome" id="R-CEL-6798695">
    <property type="pathway name" value="Neutrophil degranulation"/>
</dbReference>
<dbReference type="UniPathway" id="UPA00557">
    <property type="reaction ID" value="UER00613"/>
</dbReference>
<dbReference type="PRO" id="PR:Q22267"/>
<dbReference type="Proteomes" id="UP000001940">
    <property type="component" value="Chromosome V"/>
</dbReference>
<dbReference type="Bgee" id="WBGene00011543">
    <property type="expression patterns" value="Expressed in germ line (C elegans) and 4 other cell types or tissues"/>
</dbReference>
<dbReference type="ExpressionAtlas" id="Q22267">
    <property type="expression patterns" value="baseline and differential"/>
</dbReference>
<dbReference type="GO" id="GO:0005783">
    <property type="term" value="C:endoplasmic reticulum"/>
    <property type="evidence" value="ECO:0000318"/>
    <property type="project" value="GO_Central"/>
</dbReference>
<dbReference type="GO" id="GO:0016020">
    <property type="term" value="C:membrane"/>
    <property type="evidence" value="ECO:0007669"/>
    <property type="project" value="UniProtKB-SubCell"/>
</dbReference>
<dbReference type="GO" id="GO:0003841">
    <property type="term" value="F:1-acylglycerol-3-phosphate O-acyltransferase activity"/>
    <property type="evidence" value="ECO:0000318"/>
    <property type="project" value="GO_Central"/>
</dbReference>
<dbReference type="GO" id="GO:0016024">
    <property type="term" value="P:CDP-diacylglycerol biosynthetic process"/>
    <property type="evidence" value="ECO:0007669"/>
    <property type="project" value="UniProtKB-UniPathway"/>
</dbReference>
<dbReference type="GO" id="GO:0006654">
    <property type="term" value="P:phosphatidic acid biosynthetic process"/>
    <property type="evidence" value="ECO:0000318"/>
    <property type="project" value="GO_Central"/>
</dbReference>
<dbReference type="CDD" id="cd07989">
    <property type="entry name" value="LPLAT_AGPAT-like"/>
    <property type="match status" value="1"/>
</dbReference>
<dbReference type="InterPro" id="IPR004552">
    <property type="entry name" value="AGP_acyltrans"/>
</dbReference>
<dbReference type="InterPro" id="IPR002123">
    <property type="entry name" value="Plipid/glycerol_acylTrfase"/>
</dbReference>
<dbReference type="NCBIfam" id="TIGR00530">
    <property type="entry name" value="AGP_acyltrn"/>
    <property type="match status" value="1"/>
</dbReference>
<dbReference type="PANTHER" id="PTHR10434">
    <property type="entry name" value="1-ACYL-SN-GLYCEROL-3-PHOSPHATE ACYLTRANSFERASE"/>
    <property type="match status" value="1"/>
</dbReference>
<dbReference type="PANTHER" id="PTHR10434:SF11">
    <property type="entry name" value="1-ACYL-SN-GLYCEROL-3-PHOSPHATE ACYLTRANSFERASE"/>
    <property type="match status" value="1"/>
</dbReference>
<dbReference type="Pfam" id="PF01553">
    <property type="entry name" value="Acyltransferase"/>
    <property type="match status" value="1"/>
</dbReference>
<dbReference type="SMART" id="SM00563">
    <property type="entry name" value="PlsC"/>
    <property type="match status" value="1"/>
</dbReference>
<dbReference type="SUPFAM" id="SSF69593">
    <property type="entry name" value="Glycerol-3-phosphate (1)-acyltransferase"/>
    <property type="match status" value="1"/>
</dbReference>
<feature type="chain" id="PRO_0000208203" description="Putative 1-acyl-sn-glycerol-3-phosphate acyltransferase acl-2">
    <location>
        <begin position="1"/>
        <end position="282"/>
    </location>
</feature>
<feature type="transmembrane region" description="Helical" evidence="2">
    <location>
        <begin position="4"/>
        <end position="24"/>
    </location>
</feature>
<feature type="transmembrane region" description="Helical" evidence="2">
    <location>
        <begin position="32"/>
        <end position="52"/>
    </location>
</feature>
<feature type="transmembrane region" description="Helical" evidence="2">
    <location>
        <begin position="122"/>
        <end position="142"/>
    </location>
</feature>
<feature type="short sequence motif" description="HXXXXD motif">
    <location>
        <begin position="98"/>
        <end position="103"/>
    </location>
</feature>